<accession>A7I4V4</accession>
<keyword id="KW-0173">Coenzyme A biosynthesis</keyword>
<keyword id="KW-0342">GTP-binding</keyword>
<keyword id="KW-0418">Kinase</keyword>
<keyword id="KW-0547">Nucleotide-binding</keyword>
<keyword id="KW-1185">Reference proteome</keyword>
<keyword id="KW-0808">Transferase</keyword>
<dbReference type="EC" id="2.7.1.237" evidence="1"/>
<dbReference type="EMBL" id="CP000780">
    <property type="protein sequence ID" value="ABS54765.1"/>
    <property type="molecule type" value="Genomic_DNA"/>
</dbReference>
<dbReference type="RefSeq" id="WP_011991253.1">
    <property type="nucleotide sequence ID" value="NC_009712.1"/>
</dbReference>
<dbReference type="SMR" id="A7I4V4"/>
<dbReference type="STRING" id="456442.Mboo_0243"/>
<dbReference type="GeneID" id="5410558"/>
<dbReference type="KEGG" id="mbn:Mboo_0243"/>
<dbReference type="eggNOG" id="arCOG04076">
    <property type="taxonomic scope" value="Archaea"/>
</dbReference>
<dbReference type="HOGENOM" id="CLU_120795_0_0_2"/>
<dbReference type="OrthoDB" id="15447at2157"/>
<dbReference type="UniPathway" id="UPA00241"/>
<dbReference type="Proteomes" id="UP000002408">
    <property type="component" value="Chromosome"/>
</dbReference>
<dbReference type="GO" id="GO:0005525">
    <property type="term" value="F:GTP binding"/>
    <property type="evidence" value="ECO:0007669"/>
    <property type="project" value="UniProtKB-UniRule"/>
</dbReference>
<dbReference type="GO" id="GO:0016301">
    <property type="term" value="F:kinase activity"/>
    <property type="evidence" value="ECO:0007669"/>
    <property type="project" value="UniProtKB-UniRule"/>
</dbReference>
<dbReference type="GO" id="GO:0015937">
    <property type="term" value="P:coenzyme A biosynthetic process"/>
    <property type="evidence" value="ECO:0007669"/>
    <property type="project" value="UniProtKB-UniRule"/>
</dbReference>
<dbReference type="HAMAP" id="MF_00590">
    <property type="entry name" value="Dephospho_CoA_kinase_GTP_dep"/>
    <property type="match status" value="1"/>
</dbReference>
<dbReference type="InterPro" id="IPR007164">
    <property type="entry name" value="GTP-dep_dephospho-CoA_kin"/>
</dbReference>
<dbReference type="PANTHER" id="PTHR40732:SF1">
    <property type="entry name" value="GTP-DEPENDENT DEPHOSPHO-COA KINASE"/>
    <property type="match status" value="1"/>
</dbReference>
<dbReference type="PANTHER" id="PTHR40732">
    <property type="entry name" value="UPF0218 PROTEIN TK1697"/>
    <property type="match status" value="1"/>
</dbReference>
<dbReference type="Pfam" id="PF04019">
    <property type="entry name" value="DUF359"/>
    <property type="match status" value="1"/>
</dbReference>
<dbReference type="PIRSF" id="PIRSF006533">
    <property type="entry name" value="UCP006533"/>
    <property type="match status" value="1"/>
</dbReference>
<evidence type="ECO:0000255" key="1">
    <source>
        <dbReference type="HAMAP-Rule" id="MF_00590"/>
    </source>
</evidence>
<gene>
    <name type="ordered locus">Mboo_0243</name>
</gene>
<name>DPCKG_METB6</name>
<comment type="function">
    <text evidence="1">Catalyzes the GTP-dependent phosphorylation of the 3'-hydroxyl group of dephosphocoenzyme A to form coenzyme A (CoA).</text>
</comment>
<comment type="catalytic activity">
    <reaction evidence="1">
        <text>3'-dephospho-CoA + GTP = GDP + CoA + H(+)</text>
        <dbReference type="Rhea" id="RHEA:61156"/>
        <dbReference type="ChEBI" id="CHEBI:15378"/>
        <dbReference type="ChEBI" id="CHEBI:37565"/>
        <dbReference type="ChEBI" id="CHEBI:57287"/>
        <dbReference type="ChEBI" id="CHEBI:57328"/>
        <dbReference type="ChEBI" id="CHEBI:58189"/>
        <dbReference type="EC" id="2.7.1.237"/>
    </reaction>
</comment>
<comment type="pathway">
    <text evidence="1">Cofactor biosynthesis; coenzyme A biosynthesis.</text>
</comment>
<comment type="similarity">
    <text evidence="1">Belongs to the GTP-dependent DPCK family.</text>
</comment>
<reference key="1">
    <citation type="journal article" date="2015" name="Microbiology">
        <title>Genome of Methanoregula boonei 6A8 reveals adaptations to oligotrophic peatland environments.</title>
        <authorList>
            <person name="Braeuer S."/>
            <person name="Cadillo-Quiroz H."/>
            <person name="Kyrpides N."/>
            <person name="Woyke T."/>
            <person name="Goodwin L."/>
            <person name="Detter C."/>
            <person name="Podell S."/>
            <person name="Yavitt J.B."/>
            <person name="Zinder S.H."/>
        </authorList>
    </citation>
    <scope>NUCLEOTIDE SEQUENCE [LARGE SCALE GENOMIC DNA]</scope>
    <source>
        <strain>DSM 21154 / JCM 14090 / 6A8</strain>
    </source>
</reference>
<protein>
    <recommendedName>
        <fullName evidence="1">GTP-dependent dephospho-CoA kinase</fullName>
        <ecNumber evidence="1">2.7.1.237</ecNumber>
    </recommendedName>
    <alternativeName>
        <fullName evidence="1">Dephospho-coenzyme A kinase</fullName>
        <shortName evidence="1">DPCK</shortName>
    </alternativeName>
</protein>
<proteinExistence type="inferred from homology"/>
<feature type="chain" id="PRO_0000380053" description="GTP-dependent dephospho-CoA kinase">
    <location>
        <begin position="1"/>
        <end position="168"/>
    </location>
</feature>
<feature type="binding site" evidence="1">
    <location>
        <position position="40"/>
    </location>
    <ligand>
        <name>GTP</name>
        <dbReference type="ChEBI" id="CHEBI:37565"/>
    </ligand>
</feature>
<feature type="binding site" evidence="1">
    <location>
        <position position="41"/>
    </location>
    <ligand>
        <name>GTP</name>
        <dbReference type="ChEBI" id="CHEBI:37565"/>
    </ligand>
</feature>
<feature type="binding site" evidence="1">
    <location>
        <position position="42"/>
    </location>
    <ligand>
        <name>GTP</name>
        <dbReference type="ChEBI" id="CHEBI:37565"/>
    </ligand>
</feature>
<feature type="binding site" evidence="1">
    <location>
        <position position="59"/>
    </location>
    <ligand>
        <name>GTP</name>
        <dbReference type="ChEBI" id="CHEBI:37565"/>
    </ligand>
</feature>
<feature type="binding site" evidence="1">
    <location>
        <position position="112"/>
    </location>
    <ligand>
        <name>GTP</name>
        <dbReference type="ChEBI" id="CHEBI:37565"/>
    </ligand>
</feature>
<sequence>MFVLPDESRQLFKDPFGTLHRDIGTVLPELAGRTIYSVGDVVTHSLQQNGITPAIAVVDGQTMRSPCIKMPEIAGPCIHVKNPPGTITDELVSALTHAVDHTPVTILVDGEEDLAVIPLVIAAPLSSIVIYGQPNEGVVLRIVDDQAKTAARRLLTQFTKTESPIPHN</sequence>
<organism>
    <name type="scientific">Methanoregula boonei (strain DSM 21154 / JCM 14090 / 6A8)</name>
    <dbReference type="NCBI Taxonomy" id="456442"/>
    <lineage>
        <taxon>Archaea</taxon>
        <taxon>Methanobacteriati</taxon>
        <taxon>Methanobacteriota</taxon>
        <taxon>Stenosarchaea group</taxon>
        <taxon>Methanomicrobia</taxon>
        <taxon>Methanomicrobiales</taxon>
        <taxon>Methanoregulaceae</taxon>
        <taxon>Methanoregula</taxon>
    </lineage>
</organism>